<reference key="1">
    <citation type="submission" date="2007-06" db="EMBL/GenBank/DDBJ databases">
        <title>Complete sequence of Methanococcus vannielii SB.</title>
        <authorList>
            <consortium name="US DOE Joint Genome Institute"/>
            <person name="Copeland A."/>
            <person name="Lucas S."/>
            <person name="Lapidus A."/>
            <person name="Barry K."/>
            <person name="Glavina del Rio T."/>
            <person name="Dalin E."/>
            <person name="Tice H."/>
            <person name="Pitluck S."/>
            <person name="Chain P."/>
            <person name="Malfatti S."/>
            <person name="Shin M."/>
            <person name="Vergez L."/>
            <person name="Schmutz J."/>
            <person name="Larimer F."/>
            <person name="Land M."/>
            <person name="Hauser L."/>
            <person name="Kyrpides N."/>
            <person name="Anderson I."/>
            <person name="Sieprawska-Lupa M."/>
            <person name="Whitman W.B."/>
            <person name="Richardson P."/>
        </authorList>
    </citation>
    <scope>NUCLEOTIDE SEQUENCE [LARGE SCALE GENOMIC DNA]</scope>
    <source>
        <strain>ATCC 35089 / DSM 1224 / JCM 13029 / OCM 148 / SB</strain>
    </source>
</reference>
<proteinExistence type="inferred from homology"/>
<protein>
    <recommendedName>
        <fullName evidence="1">4-hydroxy-tetrahydrodipicolinate reductase</fullName>
        <shortName evidence="1">HTPA reductase</shortName>
        <ecNumber evidence="1">1.17.1.8</ecNumber>
    </recommendedName>
</protein>
<organism>
    <name type="scientific">Methanococcus vannielii (strain ATCC 35089 / DSM 1224 / JCM 13029 / OCM 148 / SB)</name>
    <dbReference type="NCBI Taxonomy" id="406327"/>
    <lineage>
        <taxon>Archaea</taxon>
        <taxon>Methanobacteriati</taxon>
        <taxon>Methanobacteriota</taxon>
        <taxon>Methanomada group</taxon>
        <taxon>Methanococci</taxon>
        <taxon>Methanococcales</taxon>
        <taxon>Methanococcaceae</taxon>
        <taxon>Methanococcus</taxon>
    </lineage>
</organism>
<keyword id="KW-0028">Amino-acid biosynthesis</keyword>
<keyword id="KW-0963">Cytoplasm</keyword>
<keyword id="KW-0220">Diaminopimelate biosynthesis</keyword>
<keyword id="KW-0457">Lysine biosynthesis</keyword>
<keyword id="KW-0520">NAD</keyword>
<keyword id="KW-0521">NADP</keyword>
<keyword id="KW-0560">Oxidoreductase</keyword>
<feature type="chain" id="PRO_1000008594" description="4-hydroxy-tetrahydrodipicolinate reductase">
    <location>
        <begin position="1"/>
        <end position="270"/>
    </location>
</feature>
<feature type="active site" description="Proton donor/acceptor" evidence="1">
    <location>
        <position position="160"/>
    </location>
</feature>
<feature type="active site" description="Proton donor" evidence="1">
    <location>
        <position position="164"/>
    </location>
</feature>
<feature type="binding site" evidence="1">
    <location>
        <begin position="8"/>
        <end position="13"/>
    </location>
    <ligand>
        <name>NAD(+)</name>
        <dbReference type="ChEBI" id="CHEBI:57540"/>
    </ligand>
</feature>
<feature type="binding site" evidence="1">
    <location>
        <position position="34"/>
    </location>
    <ligand>
        <name>NAD(+)</name>
        <dbReference type="ChEBI" id="CHEBI:57540"/>
    </ligand>
</feature>
<feature type="binding site" evidence="1">
    <location>
        <begin position="102"/>
        <end position="104"/>
    </location>
    <ligand>
        <name>NAD(+)</name>
        <dbReference type="ChEBI" id="CHEBI:57540"/>
    </ligand>
</feature>
<feature type="binding site" evidence="1">
    <location>
        <begin position="128"/>
        <end position="131"/>
    </location>
    <ligand>
        <name>NAD(+)</name>
        <dbReference type="ChEBI" id="CHEBI:57540"/>
    </ligand>
</feature>
<feature type="binding site" evidence="1">
    <location>
        <position position="161"/>
    </location>
    <ligand>
        <name>(S)-2,3,4,5-tetrahydrodipicolinate</name>
        <dbReference type="ChEBI" id="CHEBI:16845"/>
    </ligand>
</feature>
<feature type="binding site" evidence="1">
    <location>
        <begin position="170"/>
        <end position="171"/>
    </location>
    <ligand>
        <name>(S)-2,3,4,5-tetrahydrodipicolinate</name>
        <dbReference type="ChEBI" id="CHEBI:16845"/>
    </ligand>
</feature>
<comment type="function">
    <text evidence="1">Catalyzes the conversion of 4-hydroxy-tetrahydrodipicolinate (HTPA) to tetrahydrodipicolinate.</text>
</comment>
<comment type="catalytic activity">
    <reaction evidence="1">
        <text>(S)-2,3,4,5-tetrahydrodipicolinate + NAD(+) + H2O = (2S,4S)-4-hydroxy-2,3,4,5-tetrahydrodipicolinate + NADH + H(+)</text>
        <dbReference type="Rhea" id="RHEA:35323"/>
        <dbReference type="ChEBI" id="CHEBI:15377"/>
        <dbReference type="ChEBI" id="CHEBI:15378"/>
        <dbReference type="ChEBI" id="CHEBI:16845"/>
        <dbReference type="ChEBI" id="CHEBI:57540"/>
        <dbReference type="ChEBI" id="CHEBI:57945"/>
        <dbReference type="ChEBI" id="CHEBI:67139"/>
        <dbReference type="EC" id="1.17.1.8"/>
    </reaction>
</comment>
<comment type="catalytic activity">
    <reaction evidence="1">
        <text>(S)-2,3,4,5-tetrahydrodipicolinate + NADP(+) + H2O = (2S,4S)-4-hydroxy-2,3,4,5-tetrahydrodipicolinate + NADPH + H(+)</text>
        <dbReference type="Rhea" id="RHEA:35331"/>
        <dbReference type="ChEBI" id="CHEBI:15377"/>
        <dbReference type="ChEBI" id="CHEBI:15378"/>
        <dbReference type="ChEBI" id="CHEBI:16845"/>
        <dbReference type="ChEBI" id="CHEBI:57783"/>
        <dbReference type="ChEBI" id="CHEBI:58349"/>
        <dbReference type="ChEBI" id="CHEBI:67139"/>
        <dbReference type="EC" id="1.17.1.8"/>
    </reaction>
</comment>
<comment type="pathway">
    <text evidence="1">Amino-acid biosynthesis; L-lysine biosynthesis via DAP pathway; (S)-tetrahydrodipicolinate from L-aspartate: step 4/4.</text>
</comment>
<comment type="subcellular location">
    <subcellularLocation>
        <location evidence="1">Cytoplasm</location>
    </subcellularLocation>
</comment>
<comment type="similarity">
    <text evidence="1">Belongs to the DapB family.</text>
</comment>
<comment type="caution">
    <text evidence="2">Was originally thought to be a dihydrodipicolinate reductase (DHDPR), catalyzing the conversion of dihydrodipicolinate to tetrahydrodipicolinate. However, it was shown in E.coli that the substrate of the enzymatic reaction is not dihydrodipicolinate (DHDP) but in fact (2S,4S)-4-hydroxy-2,3,4,5-tetrahydrodipicolinic acid (HTPA), the product released by the DapA-catalyzed reaction.</text>
</comment>
<accession>A6UNQ4</accession>
<evidence type="ECO:0000255" key="1">
    <source>
        <dbReference type="HAMAP-Rule" id="MF_00102"/>
    </source>
</evidence>
<evidence type="ECO:0000305" key="2"/>
<dbReference type="EC" id="1.17.1.8" evidence="1"/>
<dbReference type="EMBL" id="CP000742">
    <property type="protein sequence ID" value="ABR54126.1"/>
    <property type="molecule type" value="Genomic_DNA"/>
</dbReference>
<dbReference type="RefSeq" id="WP_011972030.1">
    <property type="nucleotide sequence ID" value="NC_009634.1"/>
</dbReference>
<dbReference type="SMR" id="A6UNQ4"/>
<dbReference type="STRING" id="406327.Mevan_0216"/>
<dbReference type="GeneID" id="5325011"/>
<dbReference type="KEGG" id="mvn:Mevan_0216"/>
<dbReference type="eggNOG" id="arCOG04393">
    <property type="taxonomic scope" value="Archaea"/>
</dbReference>
<dbReference type="HOGENOM" id="CLU_047479_2_1_2"/>
<dbReference type="OrthoDB" id="195035at2157"/>
<dbReference type="UniPathway" id="UPA00034">
    <property type="reaction ID" value="UER00018"/>
</dbReference>
<dbReference type="Proteomes" id="UP000001107">
    <property type="component" value="Chromosome"/>
</dbReference>
<dbReference type="GO" id="GO:0005737">
    <property type="term" value="C:cytoplasm"/>
    <property type="evidence" value="ECO:0007669"/>
    <property type="project" value="UniProtKB-SubCell"/>
</dbReference>
<dbReference type="GO" id="GO:0008839">
    <property type="term" value="F:4-hydroxy-tetrahydrodipicolinate reductase"/>
    <property type="evidence" value="ECO:0007669"/>
    <property type="project" value="UniProtKB-EC"/>
</dbReference>
<dbReference type="GO" id="GO:0051287">
    <property type="term" value="F:NAD binding"/>
    <property type="evidence" value="ECO:0007669"/>
    <property type="project" value="UniProtKB-UniRule"/>
</dbReference>
<dbReference type="GO" id="GO:0050661">
    <property type="term" value="F:NADP binding"/>
    <property type="evidence" value="ECO:0007669"/>
    <property type="project" value="UniProtKB-UniRule"/>
</dbReference>
<dbReference type="GO" id="GO:0016726">
    <property type="term" value="F:oxidoreductase activity, acting on CH or CH2 groups, NAD or NADP as acceptor"/>
    <property type="evidence" value="ECO:0007669"/>
    <property type="project" value="UniProtKB-UniRule"/>
</dbReference>
<dbReference type="GO" id="GO:0019877">
    <property type="term" value="P:diaminopimelate biosynthetic process"/>
    <property type="evidence" value="ECO:0007669"/>
    <property type="project" value="UniProtKB-UniRule"/>
</dbReference>
<dbReference type="GO" id="GO:0009089">
    <property type="term" value="P:lysine biosynthetic process via diaminopimelate"/>
    <property type="evidence" value="ECO:0007669"/>
    <property type="project" value="UniProtKB-UniRule"/>
</dbReference>
<dbReference type="CDD" id="cd02274">
    <property type="entry name" value="DHDPR_N"/>
    <property type="match status" value="1"/>
</dbReference>
<dbReference type="FunFam" id="3.30.360.10:FF:000004">
    <property type="entry name" value="4-hydroxy-tetrahydrodipicolinate reductase"/>
    <property type="match status" value="1"/>
</dbReference>
<dbReference type="Gene3D" id="3.30.360.10">
    <property type="entry name" value="Dihydrodipicolinate Reductase, domain 2"/>
    <property type="match status" value="1"/>
</dbReference>
<dbReference type="Gene3D" id="3.40.50.720">
    <property type="entry name" value="NAD(P)-binding Rossmann-like Domain"/>
    <property type="match status" value="1"/>
</dbReference>
<dbReference type="HAMAP" id="MF_00102">
    <property type="entry name" value="DapB"/>
    <property type="match status" value="1"/>
</dbReference>
<dbReference type="InterPro" id="IPR022663">
    <property type="entry name" value="DapB_C"/>
</dbReference>
<dbReference type="InterPro" id="IPR000846">
    <property type="entry name" value="DapB_N"/>
</dbReference>
<dbReference type="InterPro" id="IPR022664">
    <property type="entry name" value="DapB_N_CS"/>
</dbReference>
<dbReference type="InterPro" id="IPR023940">
    <property type="entry name" value="DHDPR_bac"/>
</dbReference>
<dbReference type="InterPro" id="IPR036291">
    <property type="entry name" value="NAD(P)-bd_dom_sf"/>
</dbReference>
<dbReference type="NCBIfam" id="TIGR00036">
    <property type="entry name" value="dapB"/>
    <property type="match status" value="1"/>
</dbReference>
<dbReference type="PANTHER" id="PTHR20836:SF0">
    <property type="entry name" value="4-HYDROXY-TETRAHYDRODIPICOLINATE REDUCTASE 1, CHLOROPLASTIC-RELATED"/>
    <property type="match status" value="1"/>
</dbReference>
<dbReference type="PANTHER" id="PTHR20836">
    <property type="entry name" value="DIHYDRODIPICOLINATE REDUCTASE"/>
    <property type="match status" value="1"/>
</dbReference>
<dbReference type="Pfam" id="PF05173">
    <property type="entry name" value="DapB_C"/>
    <property type="match status" value="1"/>
</dbReference>
<dbReference type="Pfam" id="PF01113">
    <property type="entry name" value="DapB_N"/>
    <property type="match status" value="1"/>
</dbReference>
<dbReference type="PIRSF" id="PIRSF000161">
    <property type="entry name" value="DHPR"/>
    <property type="match status" value="1"/>
</dbReference>
<dbReference type="SUPFAM" id="SSF55347">
    <property type="entry name" value="Glyceraldehyde-3-phosphate dehydrogenase-like, C-terminal domain"/>
    <property type="match status" value="1"/>
</dbReference>
<dbReference type="SUPFAM" id="SSF51735">
    <property type="entry name" value="NAD(P)-binding Rossmann-fold domains"/>
    <property type="match status" value="1"/>
</dbReference>
<dbReference type="PROSITE" id="PS01298">
    <property type="entry name" value="DAPB"/>
    <property type="match status" value="1"/>
</dbReference>
<name>DAPB_METVS</name>
<sequence length="270" mass="28986">MVKVAVTGALGRMGSGIIQKILETEGLNVVAAIDIPNHPKKGHDIGELIGIGKLGVNLSTSDELESVLKSSGAEVLVDFTAPAPCVNTAKIASKCGVNLVIGTTGFTKEQKDEMEKAIFENKVAATISQNYAVGVNIFFKTLELLAQKLGEYDIEIVEMHHKFKKDAPSGTALRAAEIIQENLNRNSNLIYGREGITGERTKEEICIHALRGGDVVGDHTVIFANDGERLELSHKASSRQSFIAGVILAIKFVGTKKEGIFNTFDVLGLN</sequence>
<gene>
    <name evidence="1" type="primary">dapB</name>
    <name type="ordered locus">Mevan_0216</name>
</gene>